<protein>
    <recommendedName>
        <fullName evidence="6">AA9 family lytic polysaccharide monooxygenase E</fullName>
        <shortName evidence="6">AtAA9E</shortName>
        <ecNumber evidence="8">1.14.99.56</ecNumber>
    </recommendedName>
    <alternativeName>
        <fullName evidence="7">Cellulase AA9E</fullName>
    </alternativeName>
    <alternativeName>
        <fullName evidence="7">Endo-beta-1,4-glucanase AA9E</fullName>
        <shortName evidence="7">Endoglucanase AA9E</shortName>
    </alternativeName>
    <alternativeName>
        <fullName evidence="7">Glycosyl hydrolase 61 family protein AA9E</fullName>
    </alternativeName>
</protein>
<sequence>MAMSKIMSLTGLLASASLVAGHGYVSGVVVDGQYYGGYLVDKYAYSDNPPETIGWSTTATDLGFVDGTGYQSPDIICHKDGKPGALSAEVAAGGEIELQWTEWPESHHGPVLNYLAPCGGDCSAVDKTSLEFFKIEAKGLIDGSSPPGHWATDDLISNNNSWTVTIPASVQEGNYVLRHEIIGLHSAGQKDGAQNYPQCINIKVTGGGAATPAGTAGEALYKDTDPGILFDIYSDLSGGYPIPGPEVFSA</sequence>
<name>LP9E_ASPTM</name>
<accession>A0A5N6UNY1</accession>
<keyword id="KW-0119">Carbohydrate metabolism</keyword>
<keyword id="KW-0136">Cellulose degradation</keyword>
<keyword id="KW-0186">Copper</keyword>
<keyword id="KW-1015">Disulfide bond</keyword>
<keyword id="KW-0325">Glycoprotein</keyword>
<keyword id="KW-0479">Metal-binding</keyword>
<keyword id="KW-0503">Monooxygenase</keyword>
<keyword id="KW-0560">Oxidoreductase</keyword>
<keyword id="KW-0624">Polysaccharide degradation</keyword>
<keyword id="KW-1185">Reference proteome</keyword>
<keyword id="KW-0964">Secreted</keyword>
<keyword id="KW-0732">Signal</keyword>
<dbReference type="EC" id="1.14.99.56" evidence="8"/>
<dbReference type="EMBL" id="ML738660">
    <property type="protein sequence ID" value="KAE8160256.1"/>
    <property type="molecule type" value="Genomic_DNA"/>
</dbReference>
<dbReference type="SMR" id="A0A5N6UNY1"/>
<dbReference type="OrthoDB" id="4849160at2759"/>
<dbReference type="Proteomes" id="UP000326950">
    <property type="component" value="Unassembled WGS sequence"/>
</dbReference>
<dbReference type="GO" id="GO:0005576">
    <property type="term" value="C:extracellular region"/>
    <property type="evidence" value="ECO:0007669"/>
    <property type="project" value="UniProtKB-SubCell"/>
</dbReference>
<dbReference type="GO" id="GO:0046872">
    <property type="term" value="F:metal ion binding"/>
    <property type="evidence" value="ECO:0007669"/>
    <property type="project" value="UniProtKB-KW"/>
</dbReference>
<dbReference type="GO" id="GO:0004497">
    <property type="term" value="F:monooxygenase activity"/>
    <property type="evidence" value="ECO:0007669"/>
    <property type="project" value="UniProtKB-KW"/>
</dbReference>
<dbReference type="GO" id="GO:0030245">
    <property type="term" value="P:cellulose catabolic process"/>
    <property type="evidence" value="ECO:0007669"/>
    <property type="project" value="UniProtKB-KW"/>
</dbReference>
<dbReference type="CDD" id="cd21175">
    <property type="entry name" value="LPMO_AA9"/>
    <property type="match status" value="1"/>
</dbReference>
<dbReference type="Gene3D" id="2.70.50.70">
    <property type="match status" value="1"/>
</dbReference>
<dbReference type="InterPro" id="IPR049892">
    <property type="entry name" value="AA9"/>
</dbReference>
<dbReference type="InterPro" id="IPR005103">
    <property type="entry name" value="AA9_LPMO"/>
</dbReference>
<dbReference type="PANTHER" id="PTHR33353:SF34">
    <property type="entry name" value="ENDO-BETA-1,4-GLUCANASE D"/>
    <property type="match status" value="1"/>
</dbReference>
<dbReference type="PANTHER" id="PTHR33353">
    <property type="entry name" value="PUTATIVE (AFU_ORTHOLOGUE AFUA_1G12560)-RELATED"/>
    <property type="match status" value="1"/>
</dbReference>
<dbReference type="Pfam" id="PF03443">
    <property type="entry name" value="AA9"/>
    <property type="match status" value="1"/>
</dbReference>
<feature type="signal peptide" evidence="3">
    <location>
        <begin position="1"/>
        <end position="21"/>
    </location>
</feature>
<feature type="chain" id="PRO_5025068520" description="AA9 family lytic polysaccharide monooxygenase E">
    <location>
        <begin position="22"/>
        <end position="250"/>
    </location>
</feature>
<feature type="binding site" evidence="2">
    <location>
        <position position="22"/>
    </location>
    <ligand>
        <name>Cu(2+)</name>
        <dbReference type="ChEBI" id="CHEBI:29036"/>
        <note>catalytic</note>
    </ligand>
</feature>
<feature type="binding site" evidence="2">
    <location>
        <position position="107"/>
    </location>
    <ligand>
        <name>Cu(2+)</name>
        <dbReference type="ChEBI" id="CHEBI:29036"/>
        <note>catalytic</note>
    </ligand>
</feature>
<feature type="binding site" evidence="1">
    <location>
        <position position="185"/>
    </location>
    <ligand>
        <name>O2</name>
        <dbReference type="ChEBI" id="CHEBI:15379"/>
    </ligand>
</feature>
<feature type="binding site" evidence="1">
    <location>
        <position position="194"/>
    </location>
    <ligand>
        <name>O2</name>
        <dbReference type="ChEBI" id="CHEBI:15379"/>
    </ligand>
</feature>
<feature type="binding site" evidence="2">
    <location>
        <position position="196"/>
    </location>
    <ligand>
        <name>Cu(2+)</name>
        <dbReference type="ChEBI" id="CHEBI:29036"/>
        <note>catalytic</note>
    </ligand>
</feature>
<feature type="glycosylation site" description="N-linked (GlcNAc...) asparagine" evidence="4">
    <location>
        <position position="159"/>
    </location>
</feature>
<feature type="disulfide bond" evidence="2">
    <location>
        <begin position="77"/>
        <end position="199"/>
    </location>
</feature>
<feature type="disulfide bond" evidence="2">
    <location>
        <begin position="118"/>
        <end position="122"/>
    </location>
</feature>
<reference key="1">
    <citation type="journal article" date="2020" name="Nat. Commun.">
        <title>A comparative genomics study of 23 Aspergillus species from section Flavi.</title>
        <authorList>
            <person name="Kjaerboelling I."/>
            <person name="Vesth T."/>
            <person name="Frisvad J.C."/>
            <person name="Nybo J.L."/>
            <person name="Theobald S."/>
            <person name="Kildgaard S."/>
            <person name="Petersen T.I."/>
            <person name="Kuo A."/>
            <person name="Sato A."/>
            <person name="Lyhne E.K."/>
            <person name="Kogle M.E."/>
            <person name="Wiebenga A."/>
            <person name="Kun R.S."/>
            <person name="Lubbers R.J.M."/>
            <person name="Maekelae M.R."/>
            <person name="Barry K."/>
            <person name="Chovatia M."/>
            <person name="Clum A."/>
            <person name="Daum C."/>
            <person name="Haridas S."/>
            <person name="He G."/>
            <person name="LaButti K."/>
            <person name="Lipzen A."/>
            <person name="Mondo S."/>
            <person name="Pangilinan J."/>
            <person name="Riley R."/>
            <person name="Salamov A."/>
            <person name="Simmons B.A."/>
            <person name="Magnuson J.K."/>
            <person name="Henrissat B."/>
            <person name="Mortensen U.H."/>
            <person name="Larsen T.O."/>
            <person name="de Vries R.P."/>
            <person name="Grigoriev I.V."/>
            <person name="Machida M."/>
            <person name="Baker S.E."/>
            <person name="Andersen M.R."/>
        </authorList>
    </citation>
    <scope>NUCLEOTIDE SEQUENCE [LARGE SCALE GENOMIC DNA]</scope>
    <source>
        <strain>CBS 117626</strain>
    </source>
</reference>
<reference key="2">
    <citation type="journal article" date="2018" name="Front. Bioeng. Biotechnol.">
        <title>Analysis of the Transcriptome in Aspergillus tamarii During Enzymatic Degradation of Sugarcane Bagasse.</title>
        <authorList>
            <person name="Midorikawa G.E.O."/>
            <person name="Correa C.L."/>
            <person name="Noronha E.F."/>
            <person name="Filho E.X.F."/>
            <person name="Togawa R.C."/>
            <person name="Costa M.M.D.C."/>
            <person name="Silva-Junior O.B."/>
            <person name="Grynberg P."/>
            <person name="Miller R.N.G."/>
        </authorList>
    </citation>
    <scope>INDUCTION</scope>
</reference>
<reference key="3">
    <citation type="journal article" date="2020" name="PLoS ONE">
        <title>Characterization of two family AA9 LPMOs from Aspergillus tamarii with distinct activities on xyloglucan reveals structural differences linked to cleavage specificity.</title>
        <authorList>
            <person name="Monclaro A.V."/>
            <person name="Petrovic D.M."/>
            <person name="Alves G.S.C."/>
            <person name="Costa M.M.C."/>
            <person name="Midorikawa G.E.O."/>
            <person name="Miller R.N.G."/>
            <person name="Filho E.X.F."/>
            <person name="Eijsink V.G.H."/>
            <person name="Varnai A."/>
        </authorList>
    </citation>
    <scope>FUNCTION</scope>
    <scope>CATALYTIC ACTIVITY</scope>
</reference>
<comment type="function">
    <text evidence="8">Lytic polysaccharide monooxygenase (LPMO) that depolymerizes crystalline and amorphous polysaccharides via the oxidation of scissile alpha- or beta-(1-4)-glycosidic bonds, yielding C1 or C4 oxidation products (Probable). Catalysis by LPMOs requires the reduction of the active-site copper from Cu(II) to Cu(I) by a reducing agent and H(2)O(2) or O(2) as a cosubstrate (Probable).</text>
</comment>
<comment type="catalytic activity">
    <reaction evidence="8">
        <text>[(1-&gt;4)-beta-D-glucosyl]n+m + reduced acceptor + O2 = 4-dehydro-beta-D-glucosyl-[(1-&gt;4)-beta-D-glucosyl]n-1 + [(1-&gt;4)-beta-D-glucosyl]m + acceptor + H2O.</text>
        <dbReference type="EC" id="1.14.99.56"/>
    </reaction>
</comment>
<comment type="cofactor">
    <cofactor evidence="2">
        <name>Cu(2+)</name>
        <dbReference type="ChEBI" id="CHEBI:29036"/>
    </cofactor>
    <text evidence="2">Binds 1 copper ion per subunit.</text>
</comment>
<comment type="subcellular location">
    <subcellularLocation>
        <location evidence="8">Secreted</location>
    </subcellularLocation>
</comment>
<comment type="induction">
    <text evidence="5">Expression is up-regulated on steam-exploded bagasse as carbon source compared to glucose.</text>
</comment>
<comment type="biotechnology">
    <text evidence="2">Lignocellulose is the most abundant polymeric composite on Earth and is a recalcitrant but promising renewable substrate for industrial biotechnology applications. Together with cellobiose dehydrogenases (CDHs) an enzymatic system capable of oxidative cellulose cleavage is formed, which increases the efficiency of cellulases and put LPMOs at focus of biofuel research.</text>
</comment>
<comment type="similarity">
    <text evidence="7">Belongs to the polysaccharide monooxygenase AA9 family.</text>
</comment>
<evidence type="ECO:0000250" key="1">
    <source>
        <dbReference type="UniProtKB" id="Q1K8B6"/>
    </source>
</evidence>
<evidence type="ECO:0000250" key="2">
    <source>
        <dbReference type="UniProtKB" id="Q4WP32"/>
    </source>
</evidence>
<evidence type="ECO:0000255" key="3"/>
<evidence type="ECO:0000255" key="4">
    <source>
        <dbReference type="PROSITE-ProRule" id="PRU00498"/>
    </source>
</evidence>
<evidence type="ECO:0000269" key="5">
    <source>
    </source>
</evidence>
<evidence type="ECO:0000303" key="6">
    <source>
    </source>
</evidence>
<evidence type="ECO:0000305" key="7"/>
<evidence type="ECO:0000305" key="8">
    <source>
    </source>
</evidence>
<gene>
    <name type="ORF">BDV40DRAFT_218852</name>
</gene>
<proteinExistence type="evidence at protein level"/>
<organism>
    <name type="scientific">Aspergillus tamarii</name>
    <dbReference type="NCBI Taxonomy" id="41984"/>
    <lineage>
        <taxon>Eukaryota</taxon>
        <taxon>Fungi</taxon>
        <taxon>Dikarya</taxon>
        <taxon>Ascomycota</taxon>
        <taxon>Pezizomycotina</taxon>
        <taxon>Eurotiomycetes</taxon>
        <taxon>Eurotiomycetidae</taxon>
        <taxon>Eurotiales</taxon>
        <taxon>Aspergillaceae</taxon>
        <taxon>Aspergillus</taxon>
        <taxon>Aspergillus subgen. Circumdati</taxon>
    </lineage>
</organism>